<reference key="1">
    <citation type="journal article" date="1998" name="Nature">
        <title>Deciphering the biology of Mycobacterium tuberculosis from the complete genome sequence.</title>
        <authorList>
            <person name="Cole S.T."/>
            <person name="Brosch R."/>
            <person name="Parkhill J."/>
            <person name="Garnier T."/>
            <person name="Churcher C.M."/>
            <person name="Harris D.E."/>
            <person name="Gordon S.V."/>
            <person name="Eiglmeier K."/>
            <person name="Gas S."/>
            <person name="Barry C.E. III"/>
            <person name="Tekaia F."/>
            <person name="Badcock K."/>
            <person name="Basham D."/>
            <person name="Brown D."/>
            <person name="Chillingworth T."/>
            <person name="Connor R."/>
            <person name="Davies R.M."/>
            <person name="Devlin K."/>
            <person name="Feltwell T."/>
            <person name="Gentles S."/>
            <person name="Hamlin N."/>
            <person name="Holroyd S."/>
            <person name="Hornsby T."/>
            <person name="Jagels K."/>
            <person name="Krogh A."/>
            <person name="McLean J."/>
            <person name="Moule S."/>
            <person name="Murphy L.D."/>
            <person name="Oliver S."/>
            <person name="Osborne J."/>
            <person name="Quail M.A."/>
            <person name="Rajandream M.A."/>
            <person name="Rogers J."/>
            <person name="Rutter S."/>
            <person name="Seeger K."/>
            <person name="Skelton S."/>
            <person name="Squares S."/>
            <person name="Squares R."/>
            <person name="Sulston J.E."/>
            <person name="Taylor K."/>
            <person name="Whitehead S."/>
            <person name="Barrell B.G."/>
        </authorList>
    </citation>
    <scope>NUCLEOTIDE SEQUENCE [LARGE SCALE GENOMIC DNA]</scope>
    <source>
        <strain>ATCC 25618 / H37Rv</strain>
    </source>
</reference>
<reference key="2">
    <citation type="journal article" date="2006" name="Proc. Natl. Acad. Sci. U.S.A.">
        <title>Biosynthesis of mycobacterial lipoarabinomannan: role of a branching mannosyltransferase.</title>
        <authorList>
            <person name="Kaur D."/>
            <person name="Berg S."/>
            <person name="Dinadayala P."/>
            <person name="Gicquel B."/>
            <person name="Chatterjee D."/>
            <person name="McNeil M.R."/>
            <person name="Vissa V.D."/>
            <person name="Crick D.C."/>
            <person name="Jackson M."/>
            <person name="Brennan P.J."/>
        </authorList>
    </citation>
    <scope>FUNCTION IN LAM BIOSYNTHESIS</scope>
    <source>
        <strain>ATCC 25618 / H37Rv</strain>
    </source>
</reference>
<reference key="3">
    <citation type="journal article" date="2011" name="Mol. Cell. Proteomics">
        <title>Proteogenomic analysis of Mycobacterium tuberculosis by high resolution mass spectrometry.</title>
        <authorList>
            <person name="Kelkar D.S."/>
            <person name="Kumar D."/>
            <person name="Kumar P."/>
            <person name="Balakrishnan L."/>
            <person name="Muthusamy B."/>
            <person name="Yadav A.K."/>
            <person name="Shrivastava P."/>
            <person name="Marimuthu A."/>
            <person name="Anand S."/>
            <person name="Sundaram H."/>
            <person name="Kingsbury R."/>
            <person name="Harsha H.C."/>
            <person name="Nair B."/>
            <person name="Prasad T.S."/>
            <person name="Chauhan D.S."/>
            <person name="Katoch K."/>
            <person name="Katoch V.M."/>
            <person name="Kumar P."/>
            <person name="Chaerkady R."/>
            <person name="Ramachandran S."/>
            <person name="Dash D."/>
            <person name="Pandey A."/>
        </authorList>
    </citation>
    <scope>IDENTIFICATION BY MASS SPECTROMETRY [LARGE SCALE ANALYSIS]</scope>
    <source>
        <strain>ATCC 25618 / H37Rv</strain>
    </source>
</reference>
<sequence length="427" mass="47143">MSAWRAPEVGSRLGRRVLWCLLWLLAGVALGYVAWRLFGHTPYRIDIDIYQMGARAWLDGRPLYGGGVLFHTPIGLNLPFTYPPLAAVLFSPFAWLQMPAASVAITVLTLVLLIASTAIVLTGLDAWPTSRLVPAPARLRRLWLAVLIVAPATIWLEPISSNFAFGQINVVLMTLVIVDCFPRRTPWPRGLMLGLGIALKLTPAVFLLYFLLRRDGRAALTALASFAVATLLGFVLAWRDSWEYWTHTLHHTDRIGAAALNTDQNIAGALARLTIGDDERFALWVAGSLLVLAATIWAMRRVLRAGEPTLAVICVALFGLVVSPVSWSHHWVWMLPAVLVIGLLGWRRRNVALAMLSLAGVVLMRWTPIDLLPQHRETTAVWWRQLAGMSYVWWALAVIVVAGLTVTARMTPQRSLTRGLTPAPTAS</sequence>
<feature type="chain" id="PRO_0000393740" description="Polyprenol-phosphate-mannose-dependent alpha-(1-2)-phosphatidylinositol mannoside mannosyltransferase">
    <location>
        <begin position="1"/>
        <end position="427"/>
    </location>
</feature>
<feature type="transmembrane region" description="Helical" evidence="1">
    <location>
        <begin position="18"/>
        <end position="38"/>
    </location>
</feature>
<feature type="transmembrane region" description="Helical" evidence="1">
    <location>
        <begin position="101"/>
        <end position="121"/>
    </location>
</feature>
<feature type="transmembrane region" description="Helical" evidence="1">
    <location>
        <begin position="143"/>
        <end position="163"/>
    </location>
</feature>
<feature type="transmembrane region" description="Helical" evidence="1">
    <location>
        <begin position="191"/>
        <end position="211"/>
    </location>
</feature>
<feature type="transmembrane region" description="Helical" evidence="1">
    <location>
        <begin position="218"/>
        <end position="238"/>
    </location>
</feature>
<feature type="transmembrane region" description="Helical" evidence="1">
    <location>
        <begin position="279"/>
        <end position="299"/>
    </location>
</feature>
<feature type="transmembrane region" description="Helical" evidence="1">
    <location>
        <begin position="308"/>
        <end position="328"/>
    </location>
</feature>
<feature type="transmembrane region" description="Helical" evidence="1">
    <location>
        <begin position="331"/>
        <end position="346"/>
    </location>
</feature>
<feature type="transmembrane region" description="Helical" evidence="1">
    <location>
        <begin position="351"/>
        <end position="371"/>
    </location>
</feature>
<feature type="transmembrane region" description="Helical" evidence="1">
    <location>
        <begin position="386"/>
        <end position="406"/>
    </location>
</feature>
<evidence type="ECO:0000255" key="1"/>
<evidence type="ECO:0000269" key="2">
    <source>
    </source>
</evidence>
<evidence type="ECO:0000305" key="3"/>
<name>PIMG_MYCTU</name>
<dbReference type="EC" id="2.4.1.-"/>
<dbReference type="EMBL" id="AL123456">
    <property type="protein sequence ID" value="CCP44958.1"/>
    <property type="molecule type" value="Genomic_DNA"/>
</dbReference>
<dbReference type="PIR" id="G70936">
    <property type="entry name" value="G70936"/>
</dbReference>
<dbReference type="RefSeq" id="NP_216697.1">
    <property type="nucleotide sequence ID" value="NC_000962.3"/>
</dbReference>
<dbReference type="RefSeq" id="WP_003411339.1">
    <property type="nucleotide sequence ID" value="NZ_NVQJ01000008.1"/>
</dbReference>
<dbReference type="FunCoup" id="P9WMZ9">
    <property type="interactions" value="12"/>
</dbReference>
<dbReference type="STRING" id="83332.Rv2181"/>
<dbReference type="PaxDb" id="83332-Rv2181"/>
<dbReference type="GeneID" id="888269"/>
<dbReference type="KEGG" id="mtu:Rv2181"/>
<dbReference type="KEGG" id="mtv:RVBD_2181"/>
<dbReference type="TubercuList" id="Rv2181"/>
<dbReference type="eggNOG" id="COG5650">
    <property type="taxonomic scope" value="Bacteria"/>
</dbReference>
<dbReference type="InParanoid" id="P9WMZ9"/>
<dbReference type="OrthoDB" id="9774600at2"/>
<dbReference type="PhylomeDB" id="P9WMZ9"/>
<dbReference type="UniPathway" id="UPA00949"/>
<dbReference type="Proteomes" id="UP000001584">
    <property type="component" value="Chromosome"/>
</dbReference>
<dbReference type="GO" id="GO:0005886">
    <property type="term" value="C:plasma membrane"/>
    <property type="evidence" value="ECO:0007669"/>
    <property type="project" value="UniProtKB-SubCell"/>
</dbReference>
<dbReference type="GO" id="GO:0000026">
    <property type="term" value="F:alpha-1,2-mannosyltransferase activity"/>
    <property type="evidence" value="ECO:0000315"/>
    <property type="project" value="MTBBASE"/>
</dbReference>
<dbReference type="GO" id="GO:0009247">
    <property type="term" value="P:glycolipid biosynthetic process"/>
    <property type="evidence" value="ECO:0000315"/>
    <property type="project" value="MTBBASE"/>
</dbReference>
<dbReference type="GO" id="GO:0046488">
    <property type="term" value="P:phosphatidylinositol metabolic process"/>
    <property type="evidence" value="ECO:0007669"/>
    <property type="project" value="UniProtKB-UniPathway"/>
</dbReference>
<dbReference type="GO" id="GO:0008654">
    <property type="term" value="P:phospholipid biosynthetic process"/>
    <property type="evidence" value="ECO:0007669"/>
    <property type="project" value="UniProtKB-KW"/>
</dbReference>
<dbReference type="InterPro" id="IPR018584">
    <property type="entry name" value="GT87"/>
</dbReference>
<dbReference type="Pfam" id="PF09594">
    <property type="entry name" value="GT87"/>
    <property type="match status" value="1"/>
</dbReference>
<accession>P9WMZ9</accession>
<accession>L0TAF3</accession>
<accession>O53515</accession>
<accession>Q7D7E4</accession>
<gene>
    <name type="ordered locus">Rv2181</name>
</gene>
<organism>
    <name type="scientific">Mycobacterium tuberculosis (strain ATCC 25618 / H37Rv)</name>
    <dbReference type="NCBI Taxonomy" id="83332"/>
    <lineage>
        <taxon>Bacteria</taxon>
        <taxon>Bacillati</taxon>
        <taxon>Actinomycetota</taxon>
        <taxon>Actinomycetes</taxon>
        <taxon>Mycobacteriales</taxon>
        <taxon>Mycobacteriaceae</taxon>
        <taxon>Mycobacterium</taxon>
        <taxon>Mycobacterium tuberculosis complex</taxon>
    </lineage>
</organism>
<proteinExistence type="evidence at protein level"/>
<comment type="function">
    <text evidence="2">Responsible for the addition of alpha-(1-2) mannose branches to the linear mannan core on the biosynthetic pathway to mature lipoarabinomannan (LAM).</text>
</comment>
<comment type="pathway">
    <text>Phospholipid metabolism; phosphatidylinositol metabolism.</text>
</comment>
<comment type="subcellular location">
    <subcellularLocation>
        <location evidence="3">Cell membrane</location>
        <topology evidence="3">Multi-pass membrane protein</topology>
    </subcellularLocation>
</comment>
<comment type="similarity">
    <text evidence="3">Belongs to the glycosyltransferase 87 family.</text>
</comment>
<keyword id="KW-1003">Cell membrane</keyword>
<keyword id="KW-0328">Glycosyltransferase</keyword>
<keyword id="KW-0444">Lipid biosynthesis</keyword>
<keyword id="KW-0443">Lipid metabolism</keyword>
<keyword id="KW-0472">Membrane</keyword>
<keyword id="KW-0594">Phospholipid biosynthesis</keyword>
<keyword id="KW-1208">Phospholipid metabolism</keyword>
<keyword id="KW-1185">Reference proteome</keyword>
<keyword id="KW-0808">Transferase</keyword>
<keyword id="KW-0812">Transmembrane</keyword>
<keyword id="KW-1133">Transmembrane helix</keyword>
<keyword id="KW-0843">Virulence</keyword>
<protein>
    <recommendedName>
        <fullName>Polyprenol-phosphate-mannose-dependent alpha-(1-2)-phosphatidylinositol mannoside mannosyltransferase</fullName>
        <ecNumber>2.4.1.-</ecNumber>
    </recommendedName>
    <alternativeName>
        <fullName>Alpha-D-mannose-alpha-(1-2)-mannosyltransferase</fullName>
    </alternativeName>
    <alternativeName>
        <fullName>Alpha-mannosyltransferase</fullName>
        <shortName>Alpha-ManT</shortName>
    </alternativeName>
    <alternativeName>
        <fullName>PPM-dependent mannosyltransferase</fullName>
    </alternativeName>
    <alternativeName>
        <fullName>Polyprenol-phosphate-mannose alpha-mannosyltransferase</fullName>
        <shortName>PPM alpha-mannosyltransferase</shortName>
    </alternativeName>
</protein>